<sequence length="176" mass="18806">MSKVKKNDETLSEVLVDVNRVTKVVKGGRSFAFSAYVVVGDKAGRVGAGHGKAKEVNEARGKAKQAAKKRMMKVPLYQNRTIHHDVVGKSGAAKVILRRAKAGTGIIAGGSMRAIFDSLGVHDIVAKSIGSTNVYAMISATFDALNKLASPKSIAMRRDKKVNEISVKSAEIQVNE</sequence>
<gene>
    <name evidence="1" type="primary">rpsE</name>
    <name type="ordered locus">RC0989</name>
</gene>
<name>RS5_RICCN</name>
<keyword id="KW-0687">Ribonucleoprotein</keyword>
<keyword id="KW-0689">Ribosomal protein</keyword>
<keyword id="KW-0694">RNA-binding</keyword>
<keyword id="KW-0699">rRNA-binding</keyword>
<proteinExistence type="inferred from homology"/>
<organism>
    <name type="scientific">Rickettsia conorii (strain ATCC VR-613 / Malish 7)</name>
    <dbReference type="NCBI Taxonomy" id="272944"/>
    <lineage>
        <taxon>Bacteria</taxon>
        <taxon>Pseudomonadati</taxon>
        <taxon>Pseudomonadota</taxon>
        <taxon>Alphaproteobacteria</taxon>
        <taxon>Rickettsiales</taxon>
        <taxon>Rickettsiaceae</taxon>
        <taxon>Rickettsieae</taxon>
        <taxon>Rickettsia</taxon>
        <taxon>spotted fever group</taxon>
    </lineage>
</organism>
<comment type="function">
    <text evidence="1">With S4 and S12 plays an important role in translational accuracy.</text>
</comment>
<comment type="function">
    <text evidence="1">Located at the back of the 30S subunit body where it stabilizes the conformation of the head with respect to the body.</text>
</comment>
<comment type="subunit">
    <text evidence="1">Part of the 30S ribosomal subunit. Contacts proteins S4 and S8.</text>
</comment>
<comment type="domain">
    <text>The N-terminal domain interacts with the head of the 30S subunit; the C-terminal domain interacts with the body and contacts protein S4. The interaction surface between S4 and S5 is involved in control of translational fidelity.</text>
</comment>
<comment type="similarity">
    <text evidence="1">Belongs to the universal ribosomal protein uS5 family.</text>
</comment>
<accession>Q92GY3</accession>
<feature type="chain" id="PRO_0000131582" description="Small ribosomal subunit protein uS5">
    <location>
        <begin position="1"/>
        <end position="176"/>
    </location>
</feature>
<feature type="domain" description="S5 DRBM" evidence="1">
    <location>
        <begin position="11"/>
        <end position="74"/>
    </location>
</feature>
<protein>
    <recommendedName>
        <fullName evidence="1">Small ribosomal subunit protein uS5</fullName>
    </recommendedName>
    <alternativeName>
        <fullName evidence="2">30S ribosomal protein S5</fullName>
    </alternativeName>
</protein>
<reference key="1">
    <citation type="journal article" date="2001" name="Science">
        <title>Mechanisms of evolution in Rickettsia conorii and R. prowazekii.</title>
        <authorList>
            <person name="Ogata H."/>
            <person name="Audic S."/>
            <person name="Renesto-Audiffren P."/>
            <person name="Fournier P.-E."/>
            <person name="Barbe V."/>
            <person name="Samson D."/>
            <person name="Roux V."/>
            <person name="Cossart P."/>
            <person name="Weissenbach J."/>
            <person name="Claverie J.-M."/>
            <person name="Raoult D."/>
        </authorList>
    </citation>
    <scope>NUCLEOTIDE SEQUENCE [LARGE SCALE GENOMIC DNA]</scope>
    <source>
        <strain>ATCC VR-613 / Malish 7</strain>
    </source>
</reference>
<evidence type="ECO:0000255" key="1">
    <source>
        <dbReference type="HAMAP-Rule" id="MF_01307"/>
    </source>
</evidence>
<evidence type="ECO:0000305" key="2"/>
<dbReference type="EMBL" id="AE006914">
    <property type="protein sequence ID" value="AAL03527.1"/>
    <property type="molecule type" value="Genomic_DNA"/>
</dbReference>
<dbReference type="PIR" id="E97823">
    <property type="entry name" value="E97823"/>
</dbReference>
<dbReference type="RefSeq" id="WP_010977579.1">
    <property type="nucleotide sequence ID" value="NC_003103.1"/>
</dbReference>
<dbReference type="SMR" id="Q92GY3"/>
<dbReference type="GeneID" id="928132"/>
<dbReference type="KEGG" id="rco:RC0989"/>
<dbReference type="PATRIC" id="fig|272944.4.peg.1129"/>
<dbReference type="HOGENOM" id="CLU_065898_2_2_5"/>
<dbReference type="Proteomes" id="UP000000816">
    <property type="component" value="Chromosome"/>
</dbReference>
<dbReference type="GO" id="GO:0015935">
    <property type="term" value="C:small ribosomal subunit"/>
    <property type="evidence" value="ECO:0007669"/>
    <property type="project" value="InterPro"/>
</dbReference>
<dbReference type="GO" id="GO:0019843">
    <property type="term" value="F:rRNA binding"/>
    <property type="evidence" value="ECO:0007669"/>
    <property type="project" value="UniProtKB-UniRule"/>
</dbReference>
<dbReference type="GO" id="GO:0003735">
    <property type="term" value="F:structural constituent of ribosome"/>
    <property type="evidence" value="ECO:0007669"/>
    <property type="project" value="InterPro"/>
</dbReference>
<dbReference type="GO" id="GO:0006412">
    <property type="term" value="P:translation"/>
    <property type="evidence" value="ECO:0007669"/>
    <property type="project" value="UniProtKB-UniRule"/>
</dbReference>
<dbReference type="FunFam" id="3.30.230.10:FF:000002">
    <property type="entry name" value="30S ribosomal protein S5"/>
    <property type="match status" value="1"/>
</dbReference>
<dbReference type="Gene3D" id="3.30.160.20">
    <property type="match status" value="1"/>
</dbReference>
<dbReference type="Gene3D" id="3.30.230.10">
    <property type="match status" value="1"/>
</dbReference>
<dbReference type="HAMAP" id="MF_01307_B">
    <property type="entry name" value="Ribosomal_uS5_B"/>
    <property type="match status" value="1"/>
</dbReference>
<dbReference type="InterPro" id="IPR020568">
    <property type="entry name" value="Ribosomal_Su5_D2-typ_SF"/>
</dbReference>
<dbReference type="InterPro" id="IPR000851">
    <property type="entry name" value="Ribosomal_uS5"/>
</dbReference>
<dbReference type="InterPro" id="IPR005712">
    <property type="entry name" value="Ribosomal_uS5_bac-type"/>
</dbReference>
<dbReference type="InterPro" id="IPR005324">
    <property type="entry name" value="Ribosomal_uS5_C"/>
</dbReference>
<dbReference type="InterPro" id="IPR013810">
    <property type="entry name" value="Ribosomal_uS5_N"/>
</dbReference>
<dbReference type="InterPro" id="IPR018192">
    <property type="entry name" value="Ribosomal_uS5_N_CS"/>
</dbReference>
<dbReference type="InterPro" id="IPR014721">
    <property type="entry name" value="Ribsml_uS5_D2-typ_fold_subgr"/>
</dbReference>
<dbReference type="NCBIfam" id="TIGR01021">
    <property type="entry name" value="rpsE_bact"/>
    <property type="match status" value="1"/>
</dbReference>
<dbReference type="PANTHER" id="PTHR48277">
    <property type="entry name" value="MITOCHONDRIAL RIBOSOMAL PROTEIN S5"/>
    <property type="match status" value="1"/>
</dbReference>
<dbReference type="PANTHER" id="PTHR48277:SF1">
    <property type="entry name" value="MITOCHONDRIAL RIBOSOMAL PROTEIN S5"/>
    <property type="match status" value="1"/>
</dbReference>
<dbReference type="Pfam" id="PF00333">
    <property type="entry name" value="Ribosomal_S5"/>
    <property type="match status" value="1"/>
</dbReference>
<dbReference type="Pfam" id="PF03719">
    <property type="entry name" value="Ribosomal_S5_C"/>
    <property type="match status" value="1"/>
</dbReference>
<dbReference type="SUPFAM" id="SSF54768">
    <property type="entry name" value="dsRNA-binding domain-like"/>
    <property type="match status" value="1"/>
</dbReference>
<dbReference type="SUPFAM" id="SSF54211">
    <property type="entry name" value="Ribosomal protein S5 domain 2-like"/>
    <property type="match status" value="1"/>
</dbReference>
<dbReference type="PROSITE" id="PS00585">
    <property type="entry name" value="RIBOSOMAL_S5"/>
    <property type="match status" value="1"/>
</dbReference>
<dbReference type="PROSITE" id="PS50881">
    <property type="entry name" value="S5_DSRBD"/>
    <property type="match status" value="1"/>
</dbReference>